<accession>A9W327</accession>
<sequence length="211" mass="22913">MSTDLRTHVLSEHHVSRETAASLDLYVAQLTRWQTVKNLVGPATLKEVWHRHIADALQLLTVAPEATRWLDLGSGAGIPGLILALAGKERPGFHVGLVESNARKCAFLSETARLTGAPVTVHNARIEAVIGTLTDTEIVCARALAPLSQLLAWTEPLLTSGTIGLFPKGRDAATELTEAEDEWTFTRDLIPSRTDSQARIVRVTSLSRVDP</sequence>
<evidence type="ECO:0000255" key="1">
    <source>
        <dbReference type="HAMAP-Rule" id="MF_00074"/>
    </source>
</evidence>
<gene>
    <name evidence="1" type="primary">rsmG</name>
    <name type="ordered locus">Mext_1584</name>
</gene>
<keyword id="KW-0963">Cytoplasm</keyword>
<keyword id="KW-0489">Methyltransferase</keyword>
<keyword id="KW-0698">rRNA processing</keyword>
<keyword id="KW-0949">S-adenosyl-L-methionine</keyword>
<keyword id="KW-0808">Transferase</keyword>
<protein>
    <recommendedName>
        <fullName evidence="1">Ribosomal RNA small subunit methyltransferase G</fullName>
        <ecNumber evidence="1">2.1.1.170</ecNumber>
    </recommendedName>
    <alternativeName>
        <fullName evidence="1">16S rRNA 7-methylguanosine methyltransferase</fullName>
        <shortName evidence="1">16S rRNA m7G methyltransferase</shortName>
    </alternativeName>
</protein>
<comment type="function">
    <text evidence="1">Specifically methylates the N7 position of guanine in position 527 of 16S rRNA.</text>
</comment>
<comment type="catalytic activity">
    <reaction evidence="1">
        <text>guanosine(527) in 16S rRNA + S-adenosyl-L-methionine = N(7)-methylguanosine(527) in 16S rRNA + S-adenosyl-L-homocysteine</text>
        <dbReference type="Rhea" id="RHEA:42732"/>
        <dbReference type="Rhea" id="RHEA-COMP:10209"/>
        <dbReference type="Rhea" id="RHEA-COMP:10210"/>
        <dbReference type="ChEBI" id="CHEBI:57856"/>
        <dbReference type="ChEBI" id="CHEBI:59789"/>
        <dbReference type="ChEBI" id="CHEBI:74269"/>
        <dbReference type="ChEBI" id="CHEBI:74480"/>
        <dbReference type="EC" id="2.1.1.170"/>
    </reaction>
</comment>
<comment type="subcellular location">
    <subcellularLocation>
        <location evidence="1">Cytoplasm</location>
    </subcellularLocation>
</comment>
<comment type="similarity">
    <text evidence="1">Belongs to the methyltransferase superfamily. RNA methyltransferase RsmG family.</text>
</comment>
<dbReference type="EC" id="2.1.1.170" evidence="1"/>
<dbReference type="EMBL" id="CP000908">
    <property type="protein sequence ID" value="ABY29983.1"/>
    <property type="molecule type" value="Genomic_DNA"/>
</dbReference>
<dbReference type="RefSeq" id="WP_012253185.1">
    <property type="nucleotide sequence ID" value="NC_010172.1"/>
</dbReference>
<dbReference type="SMR" id="A9W327"/>
<dbReference type="KEGG" id="mex:Mext_1584"/>
<dbReference type="eggNOG" id="COG0357">
    <property type="taxonomic scope" value="Bacteria"/>
</dbReference>
<dbReference type="HOGENOM" id="CLU_065341_1_0_5"/>
<dbReference type="BioCyc" id="MEXT419610:MEXT_RS08045-MONOMER"/>
<dbReference type="GO" id="GO:0005829">
    <property type="term" value="C:cytosol"/>
    <property type="evidence" value="ECO:0007669"/>
    <property type="project" value="TreeGrafter"/>
</dbReference>
<dbReference type="GO" id="GO:0070043">
    <property type="term" value="F:rRNA (guanine-N7-)-methyltransferase activity"/>
    <property type="evidence" value="ECO:0007669"/>
    <property type="project" value="UniProtKB-UniRule"/>
</dbReference>
<dbReference type="Gene3D" id="3.40.50.150">
    <property type="entry name" value="Vaccinia Virus protein VP39"/>
    <property type="match status" value="1"/>
</dbReference>
<dbReference type="HAMAP" id="MF_00074">
    <property type="entry name" value="16SrRNA_methyltr_G"/>
    <property type="match status" value="1"/>
</dbReference>
<dbReference type="InterPro" id="IPR003682">
    <property type="entry name" value="rRNA_ssu_MeTfrase_G"/>
</dbReference>
<dbReference type="InterPro" id="IPR029063">
    <property type="entry name" value="SAM-dependent_MTases_sf"/>
</dbReference>
<dbReference type="NCBIfam" id="TIGR00138">
    <property type="entry name" value="rsmG_gidB"/>
    <property type="match status" value="1"/>
</dbReference>
<dbReference type="PANTHER" id="PTHR31760">
    <property type="entry name" value="S-ADENOSYL-L-METHIONINE-DEPENDENT METHYLTRANSFERASES SUPERFAMILY PROTEIN"/>
    <property type="match status" value="1"/>
</dbReference>
<dbReference type="PANTHER" id="PTHR31760:SF0">
    <property type="entry name" value="S-ADENOSYL-L-METHIONINE-DEPENDENT METHYLTRANSFERASES SUPERFAMILY PROTEIN"/>
    <property type="match status" value="1"/>
</dbReference>
<dbReference type="Pfam" id="PF02527">
    <property type="entry name" value="GidB"/>
    <property type="match status" value="1"/>
</dbReference>
<dbReference type="PIRSF" id="PIRSF003078">
    <property type="entry name" value="GidB"/>
    <property type="match status" value="1"/>
</dbReference>
<dbReference type="SUPFAM" id="SSF53335">
    <property type="entry name" value="S-adenosyl-L-methionine-dependent methyltransferases"/>
    <property type="match status" value="1"/>
</dbReference>
<proteinExistence type="inferred from homology"/>
<reference key="1">
    <citation type="submission" date="2007-12" db="EMBL/GenBank/DDBJ databases">
        <title>Complete sequence of Methylobacterium extorquens PA1.</title>
        <authorList>
            <consortium name="US DOE Joint Genome Institute"/>
            <person name="Copeland A."/>
            <person name="Lucas S."/>
            <person name="Lapidus A."/>
            <person name="Barry K."/>
            <person name="Glavina del Rio T."/>
            <person name="Dalin E."/>
            <person name="Tice H."/>
            <person name="Pitluck S."/>
            <person name="Saunders E."/>
            <person name="Brettin T."/>
            <person name="Bruce D."/>
            <person name="Detter J.C."/>
            <person name="Han C."/>
            <person name="Schmutz J."/>
            <person name="Larimer F."/>
            <person name="Land M."/>
            <person name="Hauser L."/>
            <person name="Kyrpides N."/>
            <person name="Kim E."/>
            <person name="Marx C."/>
            <person name="Richardson P."/>
        </authorList>
    </citation>
    <scope>NUCLEOTIDE SEQUENCE [LARGE SCALE GENOMIC DNA]</scope>
    <source>
        <strain>PA1</strain>
    </source>
</reference>
<feature type="chain" id="PRO_1000092637" description="Ribosomal RNA small subunit methyltransferase G">
    <location>
        <begin position="1"/>
        <end position="211"/>
    </location>
</feature>
<feature type="binding site" evidence="1">
    <location>
        <position position="73"/>
    </location>
    <ligand>
        <name>S-adenosyl-L-methionine</name>
        <dbReference type="ChEBI" id="CHEBI:59789"/>
    </ligand>
</feature>
<feature type="binding site" evidence="1">
    <location>
        <begin position="126"/>
        <end position="127"/>
    </location>
    <ligand>
        <name>S-adenosyl-L-methionine</name>
        <dbReference type="ChEBI" id="CHEBI:59789"/>
    </ligand>
</feature>
<feature type="binding site" evidence="1">
    <location>
        <position position="142"/>
    </location>
    <ligand>
        <name>S-adenosyl-L-methionine</name>
        <dbReference type="ChEBI" id="CHEBI:59789"/>
    </ligand>
</feature>
<organism>
    <name type="scientific">Methylorubrum extorquens (strain PA1)</name>
    <name type="common">Methylobacterium extorquens</name>
    <dbReference type="NCBI Taxonomy" id="419610"/>
    <lineage>
        <taxon>Bacteria</taxon>
        <taxon>Pseudomonadati</taxon>
        <taxon>Pseudomonadota</taxon>
        <taxon>Alphaproteobacteria</taxon>
        <taxon>Hyphomicrobiales</taxon>
        <taxon>Methylobacteriaceae</taxon>
        <taxon>Methylorubrum</taxon>
    </lineage>
</organism>
<name>RSMG_METEP</name>